<organism>
    <name type="scientific">Nostoc punctiforme (strain ATCC 29133 / PCC 73102)</name>
    <dbReference type="NCBI Taxonomy" id="63737"/>
    <lineage>
        <taxon>Bacteria</taxon>
        <taxon>Bacillati</taxon>
        <taxon>Cyanobacteriota</taxon>
        <taxon>Cyanophyceae</taxon>
        <taxon>Nostocales</taxon>
        <taxon>Nostocaceae</taxon>
        <taxon>Nostoc</taxon>
    </lineage>
</organism>
<evidence type="ECO:0000255" key="1">
    <source>
        <dbReference type="HAMAP-Rule" id="MF_00197"/>
    </source>
</evidence>
<proteinExistence type="inferred from homology"/>
<feature type="chain" id="PRO_1000099252" description="Diaminopimelate epimerase">
    <location>
        <begin position="1"/>
        <end position="279"/>
    </location>
</feature>
<feature type="active site" description="Proton donor" evidence="1">
    <location>
        <position position="75"/>
    </location>
</feature>
<feature type="active site" description="Proton acceptor" evidence="1">
    <location>
        <position position="224"/>
    </location>
</feature>
<feature type="binding site" evidence="1">
    <location>
        <position position="13"/>
    </location>
    <ligand>
        <name>substrate</name>
    </ligand>
</feature>
<feature type="binding site" evidence="1">
    <location>
        <position position="66"/>
    </location>
    <ligand>
        <name>substrate</name>
    </ligand>
</feature>
<feature type="binding site" evidence="1">
    <location>
        <begin position="76"/>
        <end position="77"/>
    </location>
    <ligand>
        <name>substrate</name>
    </ligand>
</feature>
<feature type="binding site" evidence="1">
    <location>
        <position position="164"/>
    </location>
    <ligand>
        <name>substrate</name>
    </ligand>
</feature>
<feature type="binding site" evidence="1">
    <location>
        <position position="197"/>
    </location>
    <ligand>
        <name>substrate</name>
    </ligand>
</feature>
<feature type="binding site" evidence="1">
    <location>
        <begin position="215"/>
        <end position="216"/>
    </location>
    <ligand>
        <name>substrate</name>
    </ligand>
</feature>
<feature type="binding site" evidence="1">
    <location>
        <begin position="225"/>
        <end position="226"/>
    </location>
    <ligand>
        <name>substrate</name>
    </ligand>
</feature>
<feature type="site" description="Could be important to modulate the pK values of the two catalytic cysteine residues" evidence="1">
    <location>
        <position position="166"/>
    </location>
</feature>
<feature type="site" description="Could be important to modulate the pK values of the two catalytic cysteine residues" evidence="1">
    <location>
        <position position="215"/>
    </location>
</feature>
<name>DAPF_NOSP7</name>
<comment type="function">
    <text evidence="1">Catalyzes the stereoinversion of LL-2,6-diaminopimelate (L,L-DAP) to meso-diaminopimelate (meso-DAP), a precursor of L-lysine and an essential component of the bacterial peptidoglycan.</text>
</comment>
<comment type="catalytic activity">
    <reaction evidence="1">
        <text>(2S,6S)-2,6-diaminopimelate = meso-2,6-diaminopimelate</text>
        <dbReference type="Rhea" id="RHEA:15393"/>
        <dbReference type="ChEBI" id="CHEBI:57609"/>
        <dbReference type="ChEBI" id="CHEBI:57791"/>
        <dbReference type="EC" id="5.1.1.7"/>
    </reaction>
</comment>
<comment type="pathway">
    <text evidence="1">Amino-acid biosynthesis; L-lysine biosynthesis via DAP pathway; DL-2,6-diaminopimelate from LL-2,6-diaminopimelate: step 1/1.</text>
</comment>
<comment type="subunit">
    <text evidence="1">Homodimer.</text>
</comment>
<comment type="subcellular location">
    <subcellularLocation>
        <location evidence="1">Cytoplasm</location>
    </subcellularLocation>
</comment>
<comment type="similarity">
    <text evidence="1">Belongs to the diaminopimelate epimerase family.</text>
</comment>
<reference key="1">
    <citation type="journal article" date="2013" name="Plant Physiol.">
        <title>A Nostoc punctiforme Sugar Transporter Necessary to Establish a Cyanobacterium-Plant Symbiosis.</title>
        <authorList>
            <person name="Ekman M."/>
            <person name="Picossi S."/>
            <person name="Campbell E.L."/>
            <person name="Meeks J.C."/>
            <person name="Flores E."/>
        </authorList>
    </citation>
    <scope>NUCLEOTIDE SEQUENCE [LARGE SCALE GENOMIC DNA]</scope>
    <source>
        <strain>ATCC 29133 / PCC 73102</strain>
    </source>
</reference>
<dbReference type="EC" id="5.1.1.7" evidence="1"/>
<dbReference type="EMBL" id="CP001037">
    <property type="protein sequence ID" value="ACC83557.1"/>
    <property type="molecule type" value="Genomic_DNA"/>
</dbReference>
<dbReference type="RefSeq" id="WP_012411509.1">
    <property type="nucleotide sequence ID" value="NC_010628.1"/>
</dbReference>
<dbReference type="SMR" id="B2J3A7"/>
<dbReference type="STRING" id="63737.Npun_R5229"/>
<dbReference type="EnsemblBacteria" id="ACC83557">
    <property type="protein sequence ID" value="ACC83557"/>
    <property type="gene ID" value="Npun_R5229"/>
</dbReference>
<dbReference type="KEGG" id="npu:Npun_R5229"/>
<dbReference type="eggNOG" id="COG0253">
    <property type="taxonomic scope" value="Bacteria"/>
</dbReference>
<dbReference type="HOGENOM" id="CLU_053306_2_1_3"/>
<dbReference type="OrthoDB" id="9805408at2"/>
<dbReference type="PhylomeDB" id="B2J3A7"/>
<dbReference type="UniPathway" id="UPA00034">
    <property type="reaction ID" value="UER00025"/>
</dbReference>
<dbReference type="Proteomes" id="UP000001191">
    <property type="component" value="Chromosome"/>
</dbReference>
<dbReference type="GO" id="GO:0005829">
    <property type="term" value="C:cytosol"/>
    <property type="evidence" value="ECO:0007669"/>
    <property type="project" value="TreeGrafter"/>
</dbReference>
<dbReference type="GO" id="GO:0008837">
    <property type="term" value="F:diaminopimelate epimerase activity"/>
    <property type="evidence" value="ECO:0007669"/>
    <property type="project" value="UniProtKB-UniRule"/>
</dbReference>
<dbReference type="GO" id="GO:0009089">
    <property type="term" value="P:lysine biosynthetic process via diaminopimelate"/>
    <property type="evidence" value="ECO:0007669"/>
    <property type="project" value="UniProtKB-UniRule"/>
</dbReference>
<dbReference type="FunFam" id="3.10.310.10:FF:000009">
    <property type="entry name" value="Diaminopimelate epimerase chloroplastic"/>
    <property type="match status" value="1"/>
</dbReference>
<dbReference type="FunFam" id="3.10.310.10:FF:000011">
    <property type="entry name" value="Diaminopimelate epimerase, chloroplastic"/>
    <property type="match status" value="1"/>
</dbReference>
<dbReference type="Gene3D" id="3.10.310.10">
    <property type="entry name" value="Diaminopimelate Epimerase, Chain A, domain 1"/>
    <property type="match status" value="2"/>
</dbReference>
<dbReference type="HAMAP" id="MF_00197">
    <property type="entry name" value="DAP_epimerase"/>
    <property type="match status" value="1"/>
</dbReference>
<dbReference type="InterPro" id="IPR018510">
    <property type="entry name" value="DAP_epimerase_AS"/>
</dbReference>
<dbReference type="InterPro" id="IPR001653">
    <property type="entry name" value="DAP_epimerase_DapF"/>
</dbReference>
<dbReference type="NCBIfam" id="TIGR00652">
    <property type="entry name" value="DapF"/>
    <property type="match status" value="1"/>
</dbReference>
<dbReference type="PANTHER" id="PTHR31689:SF0">
    <property type="entry name" value="DIAMINOPIMELATE EPIMERASE"/>
    <property type="match status" value="1"/>
</dbReference>
<dbReference type="PANTHER" id="PTHR31689">
    <property type="entry name" value="DIAMINOPIMELATE EPIMERASE, CHLOROPLASTIC"/>
    <property type="match status" value="1"/>
</dbReference>
<dbReference type="Pfam" id="PF01678">
    <property type="entry name" value="DAP_epimerase"/>
    <property type="match status" value="2"/>
</dbReference>
<dbReference type="SUPFAM" id="SSF54506">
    <property type="entry name" value="Diaminopimelate epimerase-like"/>
    <property type="match status" value="2"/>
</dbReference>
<dbReference type="PROSITE" id="PS01326">
    <property type="entry name" value="DAP_EPIMERASE"/>
    <property type="match status" value="1"/>
</dbReference>
<sequence>MAIEFTKYHGLGNDFILIDNRSSSLPVLTPEQAIQLCDRHFGIGADGVIFALPGENGTDYTMRIFNSDGSEPEMCGNGIRCLAGFLADLEGQSRNKDSYRIHTLGGVMTPQLLSDGLVKVDMGLPRLLAGEIPTTLAPVEEKVISVPLEVAGKTWEVTCVNMGNPHCITFVEDVAAIELESIGPKFEHHPAFPQRINTEFIQVVRRDYLKMRVWERGAGITLACGTGACASLVAGVLTGKCDRTATVELPGGPLQIEWSEIDQRVYMTGPAERVFTGKL</sequence>
<keyword id="KW-0028">Amino-acid biosynthesis</keyword>
<keyword id="KW-0963">Cytoplasm</keyword>
<keyword id="KW-0413">Isomerase</keyword>
<keyword id="KW-0457">Lysine biosynthesis</keyword>
<keyword id="KW-1185">Reference proteome</keyword>
<accession>B2J3A7</accession>
<gene>
    <name evidence="1" type="primary">dapF</name>
    <name type="ordered locus">Npun_R5229</name>
</gene>
<protein>
    <recommendedName>
        <fullName evidence="1">Diaminopimelate epimerase</fullName>
        <shortName evidence="1">DAP epimerase</shortName>
        <ecNumber evidence="1">5.1.1.7</ecNumber>
    </recommendedName>
    <alternativeName>
        <fullName evidence="1">PLP-independent amino acid racemase</fullName>
    </alternativeName>
</protein>